<proteinExistence type="inferred from homology"/>
<feature type="chain" id="PRO_1000186901" description="Formate-dependent phosphoribosylglycinamide formyltransferase">
    <location>
        <begin position="1"/>
        <end position="393"/>
    </location>
</feature>
<feature type="domain" description="ATP-grasp" evidence="1">
    <location>
        <begin position="119"/>
        <end position="308"/>
    </location>
</feature>
<feature type="binding site" evidence="1">
    <location>
        <begin position="22"/>
        <end position="23"/>
    </location>
    <ligand>
        <name>N(1)-(5-phospho-beta-D-ribosyl)glycinamide</name>
        <dbReference type="ChEBI" id="CHEBI:143788"/>
    </ligand>
</feature>
<feature type="binding site" evidence="1">
    <location>
        <position position="82"/>
    </location>
    <ligand>
        <name>N(1)-(5-phospho-beta-D-ribosyl)glycinamide</name>
        <dbReference type="ChEBI" id="CHEBI:143788"/>
    </ligand>
</feature>
<feature type="binding site" evidence="1">
    <location>
        <position position="114"/>
    </location>
    <ligand>
        <name>ATP</name>
        <dbReference type="ChEBI" id="CHEBI:30616"/>
    </ligand>
</feature>
<feature type="binding site" evidence="1">
    <location>
        <position position="155"/>
    </location>
    <ligand>
        <name>ATP</name>
        <dbReference type="ChEBI" id="CHEBI:30616"/>
    </ligand>
</feature>
<feature type="binding site" evidence="1">
    <location>
        <begin position="160"/>
        <end position="165"/>
    </location>
    <ligand>
        <name>ATP</name>
        <dbReference type="ChEBI" id="CHEBI:30616"/>
    </ligand>
</feature>
<feature type="binding site" evidence="1">
    <location>
        <begin position="195"/>
        <end position="198"/>
    </location>
    <ligand>
        <name>ATP</name>
        <dbReference type="ChEBI" id="CHEBI:30616"/>
    </ligand>
</feature>
<feature type="binding site" evidence="1">
    <location>
        <position position="203"/>
    </location>
    <ligand>
        <name>ATP</name>
        <dbReference type="ChEBI" id="CHEBI:30616"/>
    </ligand>
</feature>
<feature type="binding site" evidence="1">
    <location>
        <position position="267"/>
    </location>
    <ligand>
        <name>Mg(2+)</name>
        <dbReference type="ChEBI" id="CHEBI:18420"/>
    </ligand>
</feature>
<feature type="binding site" evidence="1">
    <location>
        <position position="279"/>
    </location>
    <ligand>
        <name>Mg(2+)</name>
        <dbReference type="ChEBI" id="CHEBI:18420"/>
    </ligand>
</feature>
<feature type="binding site" evidence="1">
    <location>
        <position position="286"/>
    </location>
    <ligand>
        <name>N(1)-(5-phospho-beta-D-ribosyl)glycinamide</name>
        <dbReference type="ChEBI" id="CHEBI:143788"/>
    </ligand>
</feature>
<feature type="binding site" evidence="1">
    <location>
        <position position="356"/>
    </location>
    <ligand>
        <name>N(1)-(5-phospho-beta-D-ribosyl)glycinamide</name>
        <dbReference type="ChEBI" id="CHEBI:143788"/>
    </ligand>
</feature>
<feature type="binding site" evidence="1">
    <location>
        <begin position="363"/>
        <end position="364"/>
    </location>
    <ligand>
        <name>N(1)-(5-phospho-beta-D-ribosyl)glycinamide</name>
        <dbReference type="ChEBI" id="CHEBI:143788"/>
    </ligand>
</feature>
<keyword id="KW-0067">ATP-binding</keyword>
<keyword id="KW-0436">Ligase</keyword>
<keyword id="KW-0460">Magnesium</keyword>
<keyword id="KW-0479">Metal-binding</keyword>
<keyword id="KW-0547">Nucleotide-binding</keyword>
<keyword id="KW-0658">Purine biosynthesis</keyword>
<dbReference type="EC" id="6.3.1.21" evidence="1"/>
<dbReference type="EMBL" id="CP001233">
    <property type="protein sequence ID" value="ACP05500.1"/>
    <property type="molecule type" value="Genomic_DNA"/>
</dbReference>
<dbReference type="SMR" id="C3LLS4"/>
<dbReference type="KEGG" id="vcm:VCM66_1183"/>
<dbReference type="HOGENOM" id="CLU_011534_1_3_6"/>
<dbReference type="UniPathway" id="UPA00074">
    <property type="reaction ID" value="UER00127"/>
</dbReference>
<dbReference type="Proteomes" id="UP000001217">
    <property type="component" value="Chromosome I"/>
</dbReference>
<dbReference type="GO" id="GO:0005829">
    <property type="term" value="C:cytosol"/>
    <property type="evidence" value="ECO:0007669"/>
    <property type="project" value="TreeGrafter"/>
</dbReference>
<dbReference type="GO" id="GO:0005524">
    <property type="term" value="F:ATP binding"/>
    <property type="evidence" value="ECO:0007669"/>
    <property type="project" value="UniProtKB-UniRule"/>
</dbReference>
<dbReference type="GO" id="GO:0000287">
    <property type="term" value="F:magnesium ion binding"/>
    <property type="evidence" value="ECO:0007669"/>
    <property type="project" value="InterPro"/>
</dbReference>
<dbReference type="GO" id="GO:0043815">
    <property type="term" value="F:phosphoribosylglycinamide formyltransferase 2 activity"/>
    <property type="evidence" value="ECO:0007669"/>
    <property type="project" value="UniProtKB-UniRule"/>
</dbReference>
<dbReference type="GO" id="GO:0004644">
    <property type="term" value="F:phosphoribosylglycinamide formyltransferase activity"/>
    <property type="evidence" value="ECO:0007669"/>
    <property type="project" value="InterPro"/>
</dbReference>
<dbReference type="GO" id="GO:0006189">
    <property type="term" value="P:'de novo' IMP biosynthetic process"/>
    <property type="evidence" value="ECO:0007669"/>
    <property type="project" value="UniProtKB-UniRule"/>
</dbReference>
<dbReference type="FunFam" id="3.30.1490.20:FF:000013">
    <property type="entry name" value="Formate-dependent phosphoribosylglycinamide formyltransferase"/>
    <property type="match status" value="1"/>
</dbReference>
<dbReference type="FunFam" id="3.30.470.20:FF:000027">
    <property type="entry name" value="Formate-dependent phosphoribosylglycinamide formyltransferase"/>
    <property type="match status" value="1"/>
</dbReference>
<dbReference type="FunFam" id="3.40.50.20:FF:000007">
    <property type="entry name" value="Formate-dependent phosphoribosylglycinamide formyltransferase"/>
    <property type="match status" value="1"/>
</dbReference>
<dbReference type="Gene3D" id="3.40.50.20">
    <property type="match status" value="1"/>
</dbReference>
<dbReference type="Gene3D" id="3.30.1490.20">
    <property type="entry name" value="ATP-grasp fold, A domain"/>
    <property type="match status" value="1"/>
</dbReference>
<dbReference type="Gene3D" id="3.30.470.20">
    <property type="entry name" value="ATP-grasp fold, B domain"/>
    <property type="match status" value="1"/>
</dbReference>
<dbReference type="HAMAP" id="MF_01643">
    <property type="entry name" value="PurT"/>
    <property type="match status" value="1"/>
</dbReference>
<dbReference type="InterPro" id="IPR011761">
    <property type="entry name" value="ATP-grasp"/>
</dbReference>
<dbReference type="InterPro" id="IPR003135">
    <property type="entry name" value="ATP-grasp_carboxylate-amine"/>
</dbReference>
<dbReference type="InterPro" id="IPR013815">
    <property type="entry name" value="ATP_grasp_subdomain_1"/>
</dbReference>
<dbReference type="InterPro" id="IPR016185">
    <property type="entry name" value="PreATP-grasp_dom_sf"/>
</dbReference>
<dbReference type="InterPro" id="IPR005862">
    <property type="entry name" value="PurT"/>
</dbReference>
<dbReference type="InterPro" id="IPR054350">
    <property type="entry name" value="PurT/PurK_preATP-grasp"/>
</dbReference>
<dbReference type="InterPro" id="IPR048740">
    <property type="entry name" value="PurT_C"/>
</dbReference>
<dbReference type="InterPro" id="IPR011054">
    <property type="entry name" value="Rudment_hybrid_motif"/>
</dbReference>
<dbReference type="NCBIfam" id="NF006766">
    <property type="entry name" value="PRK09288.1"/>
    <property type="match status" value="1"/>
</dbReference>
<dbReference type="NCBIfam" id="TIGR01142">
    <property type="entry name" value="purT"/>
    <property type="match status" value="1"/>
</dbReference>
<dbReference type="PANTHER" id="PTHR43055">
    <property type="entry name" value="FORMATE-DEPENDENT PHOSPHORIBOSYLGLYCINAMIDE FORMYLTRANSFERASE"/>
    <property type="match status" value="1"/>
</dbReference>
<dbReference type="PANTHER" id="PTHR43055:SF1">
    <property type="entry name" value="FORMATE-DEPENDENT PHOSPHORIBOSYLGLYCINAMIDE FORMYLTRANSFERASE"/>
    <property type="match status" value="1"/>
</dbReference>
<dbReference type="Pfam" id="PF02222">
    <property type="entry name" value="ATP-grasp"/>
    <property type="match status" value="1"/>
</dbReference>
<dbReference type="Pfam" id="PF21244">
    <property type="entry name" value="PurT_C"/>
    <property type="match status" value="1"/>
</dbReference>
<dbReference type="Pfam" id="PF22660">
    <property type="entry name" value="RS_preATP-grasp-like"/>
    <property type="match status" value="1"/>
</dbReference>
<dbReference type="SUPFAM" id="SSF56059">
    <property type="entry name" value="Glutathione synthetase ATP-binding domain-like"/>
    <property type="match status" value="1"/>
</dbReference>
<dbReference type="SUPFAM" id="SSF52440">
    <property type="entry name" value="PreATP-grasp domain"/>
    <property type="match status" value="1"/>
</dbReference>
<dbReference type="SUPFAM" id="SSF51246">
    <property type="entry name" value="Rudiment single hybrid motif"/>
    <property type="match status" value="1"/>
</dbReference>
<dbReference type="PROSITE" id="PS50975">
    <property type="entry name" value="ATP_GRASP"/>
    <property type="match status" value="1"/>
</dbReference>
<organism>
    <name type="scientific">Vibrio cholerae serotype O1 (strain M66-2)</name>
    <dbReference type="NCBI Taxonomy" id="579112"/>
    <lineage>
        <taxon>Bacteria</taxon>
        <taxon>Pseudomonadati</taxon>
        <taxon>Pseudomonadota</taxon>
        <taxon>Gammaproteobacteria</taxon>
        <taxon>Vibrionales</taxon>
        <taxon>Vibrionaceae</taxon>
        <taxon>Vibrio</taxon>
    </lineage>
</organism>
<protein>
    <recommendedName>
        <fullName evidence="1">Formate-dependent phosphoribosylglycinamide formyltransferase</fullName>
        <ecNumber evidence="1">6.3.1.21</ecNumber>
    </recommendedName>
    <alternativeName>
        <fullName evidence="1">5'-phosphoribosylglycinamide transformylase 2</fullName>
    </alternativeName>
    <alternativeName>
        <fullName evidence="1">Formate-dependent GAR transformylase</fullName>
    </alternativeName>
    <alternativeName>
        <fullName evidence="1">GAR transformylase 2</fullName>
        <shortName evidence="1">GART 2</shortName>
    </alternativeName>
    <alternativeName>
        <fullName evidence="1">Non-folate glycinamide ribonucleotide transformylase</fullName>
    </alternativeName>
    <alternativeName>
        <fullName evidence="1">Phosphoribosylglycinamide formyltransferase 2</fullName>
    </alternativeName>
</protein>
<gene>
    <name evidence="1" type="primary">purT</name>
    <name type="ordered locus">VCM66_1183</name>
</gene>
<accession>C3LLS4</accession>
<comment type="function">
    <text evidence="1">Involved in the de novo purine biosynthesis. Catalyzes the transfer of formate to 5-phospho-ribosyl-glycinamide (GAR), producing 5-phospho-ribosyl-N-formylglycinamide (FGAR). Formate is provided by PurU via hydrolysis of 10-formyl-tetrahydrofolate.</text>
</comment>
<comment type="catalytic activity">
    <reaction evidence="1">
        <text>N(1)-(5-phospho-beta-D-ribosyl)glycinamide + formate + ATP = N(2)-formyl-N(1)-(5-phospho-beta-D-ribosyl)glycinamide + ADP + phosphate + H(+)</text>
        <dbReference type="Rhea" id="RHEA:24829"/>
        <dbReference type="ChEBI" id="CHEBI:15378"/>
        <dbReference type="ChEBI" id="CHEBI:15740"/>
        <dbReference type="ChEBI" id="CHEBI:30616"/>
        <dbReference type="ChEBI" id="CHEBI:43474"/>
        <dbReference type="ChEBI" id="CHEBI:143788"/>
        <dbReference type="ChEBI" id="CHEBI:147286"/>
        <dbReference type="ChEBI" id="CHEBI:456216"/>
        <dbReference type="EC" id="6.3.1.21"/>
    </reaction>
    <physiologicalReaction direction="left-to-right" evidence="1">
        <dbReference type="Rhea" id="RHEA:24830"/>
    </physiologicalReaction>
</comment>
<comment type="pathway">
    <text evidence="1">Purine metabolism; IMP biosynthesis via de novo pathway; N(2)-formyl-N(1)-(5-phospho-D-ribosyl)glycinamide from N(1)-(5-phospho-D-ribosyl)glycinamide (formate route): step 1/1.</text>
</comment>
<comment type="subunit">
    <text evidence="1">Homodimer.</text>
</comment>
<comment type="similarity">
    <text evidence="1">Belongs to the PurK/PurT family.</text>
</comment>
<evidence type="ECO:0000255" key="1">
    <source>
        <dbReference type="HAMAP-Rule" id="MF_01643"/>
    </source>
</evidence>
<sequence>MSMFGTATRDNATRVLLLGSGELGKEVAIECQRLGLEVIACDRYADAPAMQVAHRSHVFDMLDADALQQVIDLEKPHFVVPEIEAIATSKLVELEAQGLNVVPTANATRLTMNREGIRRLAAEELGLPTSAYQFADSYESFAAAVETIGLPCVCKPVMSSSGKGQSVIRTPEQIEAAWQYAQQGGRSGAGRVIVEGFVDFDYEITLLTVRAVDGVHFCAPIGHRQEDGDYRESWQPQVMSENAIKAAEYVAEQVVNALGGYGLFGVELFVKGDKVIFNEVSPRPHDTGMVTLISQELSEFALHVRAFTGLPIGQIVQYGPSASAAILGQGQSQNIQFNGLDDALSIPHTQVRLFGKPDIAGRRRLGVALSRGKTTQEATDRAIECAKAVKIHY</sequence>
<reference key="1">
    <citation type="journal article" date="2008" name="PLoS ONE">
        <title>A recalibrated molecular clock and independent origins for the cholera pandemic clones.</title>
        <authorList>
            <person name="Feng L."/>
            <person name="Reeves P.R."/>
            <person name="Lan R."/>
            <person name="Ren Y."/>
            <person name="Gao C."/>
            <person name="Zhou Z."/>
            <person name="Ren Y."/>
            <person name="Cheng J."/>
            <person name="Wang W."/>
            <person name="Wang J."/>
            <person name="Qian W."/>
            <person name="Li D."/>
            <person name="Wang L."/>
        </authorList>
    </citation>
    <scope>NUCLEOTIDE SEQUENCE [LARGE SCALE GENOMIC DNA]</scope>
    <source>
        <strain>M66-2</strain>
    </source>
</reference>
<name>PURT_VIBCM</name>